<comment type="function">
    <text evidence="1">Catalyzes the dephosphorylation of undecaprenyl diphosphate (UPP). Confers resistance to bacitracin.</text>
</comment>
<comment type="catalytic activity">
    <reaction evidence="1">
        <text>di-trans,octa-cis-undecaprenyl diphosphate + H2O = di-trans,octa-cis-undecaprenyl phosphate + phosphate + H(+)</text>
        <dbReference type="Rhea" id="RHEA:28094"/>
        <dbReference type="ChEBI" id="CHEBI:15377"/>
        <dbReference type="ChEBI" id="CHEBI:15378"/>
        <dbReference type="ChEBI" id="CHEBI:43474"/>
        <dbReference type="ChEBI" id="CHEBI:58405"/>
        <dbReference type="ChEBI" id="CHEBI:60392"/>
        <dbReference type="EC" id="3.6.1.27"/>
    </reaction>
</comment>
<comment type="subcellular location">
    <subcellularLocation>
        <location evidence="1">Cell membrane</location>
        <topology evidence="1">Multi-pass membrane protein</topology>
    </subcellularLocation>
</comment>
<comment type="miscellaneous">
    <text>Bacitracin is thought to be involved in the inhibition of peptidoglycan synthesis by sequestering undecaprenyl diphosphate, thereby reducing the pool of lipid carrier available.</text>
</comment>
<comment type="similarity">
    <text evidence="1">Belongs to the UppP family.</text>
</comment>
<proteinExistence type="inferred from homology"/>
<evidence type="ECO:0000255" key="1">
    <source>
        <dbReference type="HAMAP-Rule" id="MF_01006"/>
    </source>
</evidence>
<organism>
    <name type="scientific">Corynebacterium jeikeium (strain K411)</name>
    <dbReference type="NCBI Taxonomy" id="306537"/>
    <lineage>
        <taxon>Bacteria</taxon>
        <taxon>Bacillati</taxon>
        <taxon>Actinomycetota</taxon>
        <taxon>Actinomycetes</taxon>
        <taxon>Mycobacteriales</taxon>
        <taxon>Corynebacteriaceae</taxon>
        <taxon>Corynebacterium</taxon>
    </lineage>
</organism>
<name>UPPP1_CORJK</name>
<feature type="chain" id="PRO_0000227615" description="Undecaprenyl-diphosphatase 1">
    <location>
        <begin position="1"/>
        <end position="281"/>
    </location>
</feature>
<feature type="transmembrane region" description="Helical" evidence="1">
    <location>
        <begin position="95"/>
        <end position="115"/>
    </location>
</feature>
<feature type="transmembrane region" description="Helical" evidence="1">
    <location>
        <begin position="119"/>
        <end position="139"/>
    </location>
</feature>
<feature type="transmembrane region" description="Helical" evidence="1">
    <location>
        <begin position="152"/>
        <end position="172"/>
    </location>
</feature>
<feature type="transmembrane region" description="Helical" evidence="1">
    <location>
        <begin position="195"/>
        <end position="215"/>
    </location>
</feature>
<feature type="transmembrane region" description="Helical" evidence="1">
    <location>
        <begin position="227"/>
        <end position="247"/>
    </location>
</feature>
<feature type="transmembrane region" description="Helical" evidence="1">
    <location>
        <begin position="256"/>
        <end position="276"/>
    </location>
</feature>
<gene>
    <name evidence="1" type="primary">uppP1</name>
    <name type="ordered locus">jk0367</name>
</gene>
<dbReference type="EC" id="3.6.1.27" evidence="1"/>
<dbReference type="EMBL" id="CR931997">
    <property type="protein sequence ID" value="CAI36519.1"/>
    <property type="molecule type" value="Genomic_DNA"/>
</dbReference>
<dbReference type="RefSeq" id="WP_005296312.1">
    <property type="nucleotide sequence ID" value="NC_007164.1"/>
</dbReference>
<dbReference type="SMR" id="Q4JXD8"/>
<dbReference type="STRING" id="306537.jk0367"/>
<dbReference type="GeneID" id="92738127"/>
<dbReference type="KEGG" id="cjk:jk0367"/>
<dbReference type="eggNOG" id="COG1968">
    <property type="taxonomic scope" value="Bacteria"/>
</dbReference>
<dbReference type="HOGENOM" id="CLU_060296_1_0_11"/>
<dbReference type="OrthoDB" id="9808289at2"/>
<dbReference type="Proteomes" id="UP000000545">
    <property type="component" value="Chromosome"/>
</dbReference>
<dbReference type="GO" id="GO:0005886">
    <property type="term" value="C:plasma membrane"/>
    <property type="evidence" value="ECO:0007669"/>
    <property type="project" value="UniProtKB-SubCell"/>
</dbReference>
<dbReference type="GO" id="GO:0050380">
    <property type="term" value="F:undecaprenyl-diphosphatase activity"/>
    <property type="evidence" value="ECO:0007669"/>
    <property type="project" value="UniProtKB-UniRule"/>
</dbReference>
<dbReference type="GO" id="GO:0071555">
    <property type="term" value="P:cell wall organization"/>
    <property type="evidence" value="ECO:0007669"/>
    <property type="project" value="UniProtKB-KW"/>
</dbReference>
<dbReference type="GO" id="GO:0009252">
    <property type="term" value="P:peptidoglycan biosynthetic process"/>
    <property type="evidence" value="ECO:0007669"/>
    <property type="project" value="UniProtKB-KW"/>
</dbReference>
<dbReference type="GO" id="GO:0008360">
    <property type="term" value="P:regulation of cell shape"/>
    <property type="evidence" value="ECO:0007669"/>
    <property type="project" value="UniProtKB-KW"/>
</dbReference>
<dbReference type="GO" id="GO:0046677">
    <property type="term" value="P:response to antibiotic"/>
    <property type="evidence" value="ECO:0007669"/>
    <property type="project" value="UniProtKB-UniRule"/>
</dbReference>
<dbReference type="HAMAP" id="MF_01006">
    <property type="entry name" value="Undec_diphosphatase"/>
    <property type="match status" value="1"/>
</dbReference>
<dbReference type="InterPro" id="IPR003824">
    <property type="entry name" value="UppP"/>
</dbReference>
<dbReference type="NCBIfam" id="NF001392">
    <property type="entry name" value="PRK00281.2-1"/>
    <property type="match status" value="1"/>
</dbReference>
<dbReference type="NCBIfam" id="TIGR00753">
    <property type="entry name" value="undec_PP_bacA"/>
    <property type="match status" value="1"/>
</dbReference>
<dbReference type="PANTHER" id="PTHR30622">
    <property type="entry name" value="UNDECAPRENYL-DIPHOSPHATASE"/>
    <property type="match status" value="1"/>
</dbReference>
<dbReference type="PANTHER" id="PTHR30622:SF4">
    <property type="entry name" value="UNDECAPRENYL-DIPHOSPHATASE"/>
    <property type="match status" value="1"/>
</dbReference>
<dbReference type="Pfam" id="PF02673">
    <property type="entry name" value="BacA"/>
    <property type="match status" value="1"/>
</dbReference>
<keyword id="KW-0046">Antibiotic resistance</keyword>
<keyword id="KW-1003">Cell membrane</keyword>
<keyword id="KW-0133">Cell shape</keyword>
<keyword id="KW-0961">Cell wall biogenesis/degradation</keyword>
<keyword id="KW-0378">Hydrolase</keyword>
<keyword id="KW-0472">Membrane</keyword>
<keyword id="KW-0573">Peptidoglycan synthesis</keyword>
<keyword id="KW-1185">Reference proteome</keyword>
<keyword id="KW-0812">Transmembrane</keyword>
<keyword id="KW-1133">Transmembrane helix</keyword>
<sequence length="281" mass="30422">MTDPATTMSWVQVIVLSVVQGLTEFLPVSSSGHLRIVSQLFWGEDAGASFTAVIQLGTELAVLVFFAKDIWRILTAWFAGLADKSKRNFDYRMGWMVIAGTIPVGLAGVLLKDLIRENFRNLWITATVLILFSLVFILAERRGKKTRGFEELTMKDAVLMGLWQCLALIPGVSRSGGTISGGLFLNLDREVATRFSFLLAIPAVLASGLFSLPDAFDPQAGQAASGLQLLVGSGIGFVVGYISIAWLLKFVSNHSFAWFAAYRIPLGLLVMALLGTGVMAA</sequence>
<reference key="1">
    <citation type="journal article" date="2005" name="J. Bacteriol.">
        <title>Complete genome sequence and analysis of the multiresistant nosocomial pathogen Corynebacterium jeikeium K411, a lipid-requiring bacterium of the human skin flora.</title>
        <authorList>
            <person name="Tauch A."/>
            <person name="Kaiser O."/>
            <person name="Hain T."/>
            <person name="Goesmann A."/>
            <person name="Weisshaar B."/>
            <person name="Albersmeier A."/>
            <person name="Bekel T."/>
            <person name="Bischoff N."/>
            <person name="Brune I."/>
            <person name="Chakraborty T."/>
            <person name="Kalinowski J."/>
            <person name="Meyer F."/>
            <person name="Rupp O."/>
            <person name="Schneiker S."/>
            <person name="Viehoever P."/>
            <person name="Puehler A."/>
        </authorList>
    </citation>
    <scope>NUCLEOTIDE SEQUENCE [LARGE SCALE GENOMIC DNA]</scope>
    <source>
        <strain>K411</strain>
    </source>
</reference>
<accession>Q4JXD8</accession>
<protein>
    <recommendedName>
        <fullName evidence="1">Undecaprenyl-diphosphatase 1</fullName>
        <ecNumber evidence="1">3.6.1.27</ecNumber>
    </recommendedName>
    <alternativeName>
        <fullName evidence="1">Bacitracin resistance protein 1</fullName>
    </alternativeName>
    <alternativeName>
        <fullName evidence="1">Undecaprenyl pyrophosphate phosphatase 1</fullName>
    </alternativeName>
</protein>